<comment type="function">
    <text>Putative Notch ligand involved in the mediation of Notch signaling. Plays an essential role during limb, craniofacial and thymic development. May be involved in myogenesis and in the development of peripheral and central nervous systems.</text>
</comment>
<comment type="subcellular location">
    <subcellularLocation>
        <location>Membrane</location>
        <topology>Single-pass type I membrane protein</topology>
    </subcellularLocation>
</comment>
<comment type="tissue specificity">
    <text evidence="7">Found to be highest in fetal thymus, epidermis, foregut dorsal root ganglia and inner ear. In 2-weeK-old mice, abundant in heart, lung, thymus, skeletal muscle, brain and testis. Expression overlaps partially with Notch1 expression.</text>
</comment>
<comment type="developmental stage">
    <text>At 13 dpc, found in paravertebral vessels and dorsal root ganglia. At 14 dpc, in oropharyngeal epithelium, developing thymus and in the muscles of the tongue. By 15 dpc, in many tissues.</text>
</comment>
<sequence>MRARGWGRLPRRLLLLLVLCVQATRPMGYFELQLSALRNVNGELLSGACCDGDGRTTRAGGCGRDECDTYVRVCLKEYQAKVTPTGPCSYGYGATPVLGGNSFYLPPAGAAGDRARARSRTGGHQDPGLVVIPFQFAWPRSFTLIVEAWDWDNDTTPDEELLIERVSHAGMINPEDRWKSLHFSGHVAHLELQIRVRCDENYYSATCNKFCRPRNDFFGHYTCDQYGNKACMDGWMGKECKEAVCKQGCNLLHGGCTVPGECRCSYGWQGKFCDECVPYPGCVHGSCVEPWHCDCETNWGGLLCDKDLNYCGSHHPCVNGGTCINAEPDQYLCACPDGYLGKNCERAEHACASNPCANGGSCHEVPSGFECHCPSGWNGPTCALDIDECASNPCAAGGTCVDQVDGFECICPEQWVGATCQLDANECEGKPCLNAFSCKNLIGGYYCDCLPGWKGINCQININDCHGQCQHGGTCKDLVNGYQCVCPRGFGGRHCELEYDKCASSPCRRGGICEDLVDGFRCHCPRGLSGLHCEVDMDLCEPSPCLNGARCYNLEGDYYCACPEDFGGKNCSVPRDTCPGGACRVIDGCGFEAGSRARGVAPSGICGPHGHCVSLPGGNFSCICDSGFTGTYCHENIDDCMGQPCRNGGTCIDEVDSFRCFCPSGWEGELCDINPNDCLPDPCHSRGRCYDLVNDFYCACDDGWKGKTCHSREFQCDAYTCSNGGTCYDSGDTFRCACPPGWKGSTCTIAKNSSCVPNPCVNGGTCVGSGDSFSCICRDGWEGRTCTHNTNDCNPLPCYNGGICVDGVNWFRCECAPGFAGPDCRINIDECQSSPCAYGATCVDEINGYRCSCPPGRSGPRCQEVVIFTRPCWSRGMSFPHGSSWMEDCNSCRCLDGHRDCSKVWCGWKPCLLSGQPSDPSAQCPPGQQCQEKAVGQCLQPPCENWGECTAEEPLPPSTPCQPRSSHLDNNCARLTLRFNRDQVPQGTTVGAICSGIRALPATRAAAHDRLLLLLCDRASSGASAVEVAVSFSPARDLPDSSLIQSTAHAIVAAITQRGNSSLLLAVTEVKVETVVMGGSSTGLLVPVLCSVFSVLWLACVVICVWWTRKRRKERERSRLPRDESANNQWAPLNPIRNPIERPGGSGLGTGGHKDILYQCKNFTPPPRRAGEALPGPAGHGAGGEDEEDEELSRGDGDSPEAEKFISHKFTKDPSCSLGRPARWAPGPKVDNRAVRSTKDVRRAGRE</sequence>
<accession>Q9QYE5</accession>
<accession>F8VPV5</accession>
<accession>O55139</accession>
<accession>O70219</accession>
<organism>
    <name type="scientific">Mus musculus</name>
    <name type="common">Mouse</name>
    <dbReference type="NCBI Taxonomy" id="10090"/>
    <lineage>
        <taxon>Eukaryota</taxon>
        <taxon>Metazoa</taxon>
        <taxon>Chordata</taxon>
        <taxon>Craniata</taxon>
        <taxon>Vertebrata</taxon>
        <taxon>Euteleostomi</taxon>
        <taxon>Mammalia</taxon>
        <taxon>Eutheria</taxon>
        <taxon>Euarchontoglires</taxon>
        <taxon>Glires</taxon>
        <taxon>Rodentia</taxon>
        <taxon>Myomorpha</taxon>
        <taxon>Muroidea</taxon>
        <taxon>Muridae</taxon>
        <taxon>Murinae</taxon>
        <taxon>Mus</taxon>
        <taxon>Mus</taxon>
    </lineage>
</organism>
<proteinExistence type="evidence at transcript level"/>
<dbReference type="EMBL" id="AF038572">
    <property type="protein sequence ID" value="AAF16411.1"/>
    <property type="molecule type" value="mRNA"/>
</dbReference>
<dbReference type="EMBL" id="AC160929">
    <property type="status" value="NOT_ANNOTATED_CDS"/>
    <property type="molecule type" value="Genomic_DNA"/>
</dbReference>
<dbReference type="EMBL" id="AF010137">
    <property type="protein sequence ID" value="AAC14010.1"/>
    <property type="molecule type" value="mRNA"/>
</dbReference>
<dbReference type="EMBL" id="Y14495">
    <property type="protein sequence ID" value="CAA74835.1"/>
    <property type="molecule type" value="mRNA"/>
</dbReference>
<dbReference type="CCDS" id="CCDS26200.1"/>
<dbReference type="RefSeq" id="NP_034718.2">
    <property type="nucleotide sequence ID" value="NM_010588.3"/>
</dbReference>
<dbReference type="SMR" id="Q9QYE5"/>
<dbReference type="BioGRID" id="200855">
    <property type="interactions" value="4"/>
</dbReference>
<dbReference type="FunCoup" id="Q9QYE5">
    <property type="interactions" value="428"/>
</dbReference>
<dbReference type="STRING" id="10090.ENSMUSP00000075224"/>
<dbReference type="GlyCosmos" id="Q9QYE5">
    <property type="glycosylation" value="5 sites, No reported glycans"/>
</dbReference>
<dbReference type="GlyGen" id="Q9QYE5">
    <property type="glycosylation" value="7 sites, 3 N-linked glycans (3 sites)"/>
</dbReference>
<dbReference type="iPTMnet" id="Q9QYE5"/>
<dbReference type="PhosphoSitePlus" id="Q9QYE5"/>
<dbReference type="SwissPalm" id="Q9QYE5"/>
<dbReference type="PaxDb" id="10090-ENSMUSP00000075224"/>
<dbReference type="PeptideAtlas" id="Q9QYE5"/>
<dbReference type="ProteomicsDB" id="269113"/>
<dbReference type="Antibodypedia" id="14930">
    <property type="antibodies" value="477 antibodies from 38 providers"/>
</dbReference>
<dbReference type="DNASU" id="16450"/>
<dbReference type="Ensembl" id="ENSMUST00000075827.5">
    <property type="protein sequence ID" value="ENSMUSP00000075224.4"/>
    <property type="gene ID" value="ENSMUSG00000002799.7"/>
</dbReference>
<dbReference type="GeneID" id="16450"/>
<dbReference type="KEGG" id="mmu:16450"/>
<dbReference type="UCSC" id="uc007pfl.1">
    <property type="organism name" value="mouse"/>
</dbReference>
<dbReference type="AGR" id="MGI:1098270"/>
<dbReference type="CTD" id="3714"/>
<dbReference type="MGI" id="MGI:1098270">
    <property type="gene designation" value="Jag2"/>
</dbReference>
<dbReference type="VEuPathDB" id="HostDB:ENSMUSG00000002799"/>
<dbReference type="eggNOG" id="KOG1217">
    <property type="taxonomic scope" value="Eukaryota"/>
</dbReference>
<dbReference type="GeneTree" id="ENSGT00940000160944"/>
<dbReference type="HOGENOM" id="CLU_004732_0_0_1"/>
<dbReference type="InParanoid" id="Q9QYE5"/>
<dbReference type="OMA" id="GSWVEDC"/>
<dbReference type="OrthoDB" id="283575at2759"/>
<dbReference type="PhylomeDB" id="Q9QYE5"/>
<dbReference type="TreeFam" id="TF351835"/>
<dbReference type="Reactome" id="R-MMU-2122948">
    <property type="pathway name" value="Activated NOTCH1 Transmits Signal to the Nucleus"/>
</dbReference>
<dbReference type="Reactome" id="R-MMU-2979096">
    <property type="pathway name" value="NOTCH2 Activation and Transmission of Signal to the Nucleus"/>
</dbReference>
<dbReference type="Reactome" id="R-MMU-9013507">
    <property type="pathway name" value="NOTCH3 Activation and Transmission of Signal to the Nucleus"/>
</dbReference>
<dbReference type="BioGRID-ORCS" id="16450">
    <property type="hits" value="1 hit in 79 CRISPR screens"/>
</dbReference>
<dbReference type="PRO" id="PR:Q9QYE5"/>
<dbReference type="Proteomes" id="UP000000589">
    <property type="component" value="Chromosome 12"/>
</dbReference>
<dbReference type="RNAct" id="Q9QYE5">
    <property type="molecule type" value="protein"/>
</dbReference>
<dbReference type="Bgee" id="ENSMUSG00000002799">
    <property type="expression patterns" value="Expressed in lip and 260 other cell types or tissues"/>
</dbReference>
<dbReference type="ExpressionAtlas" id="Q9QYE5">
    <property type="expression patterns" value="baseline and differential"/>
</dbReference>
<dbReference type="GO" id="GO:0016020">
    <property type="term" value="C:membrane"/>
    <property type="evidence" value="ECO:0000314"/>
    <property type="project" value="MGI"/>
</dbReference>
<dbReference type="GO" id="GO:0005886">
    <property type="term" value="C:plasma membrane"/>
    <property type="evidence" value="ECO:0000314"/>
    <property type="project" value="UniProtKB"/>
</dbReference>
<dbReference type="GO" id="GO:0005509">
    <property type="term" value="F:calcium ion binding"/>
    <property type="evidence" value="ECO:0007669"/>
    <property type="project" value="InterPro"/>
</dbReference>
<dbReference type="GO" id="GO:0008083">
    <property type="term" value="F:growth factor activity"/>
    <property type="evidence" value="ECO:0000250"/>
    <property type="project" value="UniProtKB"/>
</dbReference>
<dbReference type="GO" id="GO:0005112">
    <property type="term" value="F:Notch binding"/>
    <property type="evidence" value="ECO:0000353"/>
    <property type="project" value="UniProtKB"/>
</dbReference>
<dbReference type="GO" id="GO:0009912">
    <property type="term" value="P:auditory receptor cell fate commitment"/>
    <property type="evidence" value="ECO:0000315"/>
    <property type="project" value="UniProtKB"/>
</dbReference>
<dbReference type="GO" id="GO:0001709">
    <property type="term" value="P:cell fate determination"/>
    <property type="evidence" value="ECO:0000303"/>
    <property type="project" value="UniProtKB"/>
</dbReference>
<dbReference type="GO" id="GO:1990134">
    <property type="term" value="P:epithelial cell apoptotic process involved in palatal shelf morphogenesis"/>
    <property type="evidence" value="ECO:0000315"/>
    <property type="project" value="MGI"/>
</dbReference>
<dbReference type="GO" id="GO:0042492">
    <property type="term" value="P:gamma-delta T cell differentiation"/>
    <property type="evidence" value="ECO:0000315"/>
    <property type="project" value="UniProtKB"/>
</dbReference>
<dbReference type="GO" id="GO:0001701">
    <property type="term" value="P:in utero embryonic development"/>
    <property type="evidence" value="ECO:0000315"/>
    <property type="project" value="MGI"/>
</dbReference>
<dbReference type="GO" id="GO:0016331">
    <property type="term" value="P:morphogenesis of embryonic epithelium"/>
    <property type="evidence" value="ECO:0000315"/>
    <property type="project" value="MGI"/>
</dbReference>
<dbReference type="GO" id="GO:0007219">
    <property type="term" value="P:Notch signaling pathway"/>
    <property type="evidence" value="ECO:0007669"/>
    <property type="project" value="UniProtKB-KW"/>
</dbReference>
<dbReference type="GO" id="GO:0042475">
    <property type="term" value="P:odontogenesis of dentin-containing tooth"/>
    <property type="evidence" value="ECO:0000315"/>
    <property type="project" value="MGI"/>
</dbReference>
<dbReference type="GO" id="GO:0045747">
    <property type="term" value="P:positive regulation of Notch signaling pathway"/>
    <property type="evidence" value="ECO:0000314"/>
    <property type="project" value="UniProtKB"/>
</dbReference>
<dbReference type="GO" id="GO:0030155">
    <property type="term" value="P:regulation of cell adhesion"/>
    <property type="evidence" value="ECO:0000315"/>
    <property type="project" value="MGI"/>
</dbReference>
<dbReference type="GO" id="GO:0042127">
    <property type="term" value="P:regulation of cell population proliferation"/>
    <property type="evidence" value="ECO:0000250"/>
    <property type="project" value="UniProtKB"/>
</dbReference>
<dbReference type="GO" id="GO:0003016">
    <property type="term" value="P:respiratory system process"/>
    <property type="evidence" value="ECO:0000315"/>
    <property type="project" value="MGI"/>
</dbReference>
<dbReference type="GO" id="GO:0007605">
    <property type="term" value="P:sensory perception of sound"/>
    <property type="evidence" value="ECO:0000303"/>
    <property type="project" value="UniProtKB"/>
</dbReference>
<dbReference type="GO" id="GO:0001501">
    <property type="term" value="P:skeletal system development"/>
    <property type="evidence" value="ECO:0000315"/>
    <property type="project" value="MGI"/>
</dbReference>
<dbReference type="GO" id="GO:0007283">
    <property type="term" value="P:spermatogenesis"/>
    <property type="evidence" value="ECO:0007669"/>
    <property type="project" value="Ensembl"/>
</dbReference>
<dbReference type="GO" id="GO:0045061">
    <property type="term" value="P:thymic T cell selection"/>
    <property type="evidence" value="ECO:0000250"/>
    <property type="project" value="UniProtKB"/>
</dbReference>
<dbReference type="CDD" id="cd00054">
    <property type="entry name" value="EGF_CA"/>
    <property type="match status" value="14"/>
</dbReference>
<dbReference type="FunFam" id="2.10.25.10:FF:000018">
    <property type="entry name" value="Delta-like 1"/>
    <property type="match status" value="1"/>
</dbReference>
<dbReference type="FunFam" id="2.10.25.10:FF:000061">
    <property type="entry name" value="Delta-like protein"/>
    <property type="match status" value="3"/>
</dbReference>
<dbReference type="FunFam" id="2.10.25.10:FF:000117">
    <property type="entry name" value="Delta-like protein"/>
    <property type="match status" value="1"/>
</dbReference>
<dbReference type="FunFam" id="2.10.25.10:FF:000148">
    <property type="entry name" value="Delta-like protein"/>
    <property type="match status" value="1"/>
</dbReference>
<dbReference type="FunFam" id="2.10.25.10:FF:000310">
    <property type="entry name" value="Delta-like protein"/>
    <property type="match status" value="1"/>
</dbReference>
<dbReference type="FunFam" id="2.10.25.10:FF:000431">
    <property type="entry name" value="Delta-like protein"/>
    <property type="match status" value="1"/>
</dbReference>
<dbReference type="FunFam" id="2.10.25.10:FF:000445">
    <property type="entry name" value="Delta-like protein"/>
    <property type="match status" value="1"/>
</dbReference>
<dbReference type="FunFam" id="2.10.25.10:FF:000473">
    <property type="entry name" value="Delta-like protein"/>
    <property type="match status" value="1"/>
</dbReference>
<dbReference type="FunFam" id="2.10.25.10:FF:000824">
    <property type="entry name" value="Delta-like protein"/>
    <property type="match status" value="1"/>
</dbReference>
<dbReference type="FunFam" id="2.10.25.140:FF:000001">
    <property type="entry name" value="Delta-like protein"/>
    <property type="match status" value="1"/>
</dbReference>
<dbReference type="FunFam" id="2.60.40.3510:FF:000006">
    <property type="entry name" value="Delta-like protein"/>
    <property type="match status" value="1"/>
</dbReference>
<dbReference type="FunFam" id="2.10.25.10:FF:000095">
    <property type="entry name" value="Notch, isoform B"/>
    <property type="match status" value="1"/>
</dbReference>
<dbReference type="FunFam" id="2.10.25.10:FF:000143">
    <property type="entry name" value="Protein crumbs 1"/>
    <property type="match status" value="1"/>
</dbReference>
<dbReference type="FunFam" id="2.10.25.10:FF:000146">
    <property type="entry name" value="Putative neurogenic locus notch"/>
    <property type="match status" value="1"/>
</dbReference>
<dbReference type="FunFam" id="2.10.25.10:FF:000006">
    <property type="entry name" value="Versican core protein-like isoform 1"/>
    <property type="match status" value="1"/>
</dbReference>
<dbReference type="Gene3D" id="2.10.25.140">
    <property type="match status" value="1"/>
</dbReference>
<dbReference type="Gene3D" id="2.60.40.3510">
    <property type="match status" value="1"/>
</dbReference>
<dbReference type="Gene3D" id="2.10.25.10">
    <property type="entry name" value="Laminin"/>
    <property type="match status" value="15"/>
</dbReference>
<dbReference type="InterPro" id="IPR001774">
    <property type="entry name" value="DSL"/>
</dbReference>
<dbReference type="InterPro" id="IPR001881">
    <property type="entry name" value="EGF-like_Ca-bd_dom"/>
</dbReference>
<dbReference type="InterPro" id="IPR013032">
    <property type="entry name" value="EGF-like_CS"/>
</dbReference>
<dbReference type="InterPro" id="IPR000742">
    <property type="entry name" value="EGF-like_dom"/>
</dbReference>
<dbReference type="InterPro" id="IPR000152">
    <property type="entry name" value="EGF-type_Asp/Asn_hydroxyl_site"/>
</dbReference>
<dbReference type="InterPro" id="IPR018097">
    <property type="entry name" value="EGF_Ca-bd_CS"/>
</dbReference>
<dbReference type="InterPro" id="IPR009030">
    <property type="entry name" value="Growth_fac_rcpt_cys_sf"/>
</dbReference>
<dbReference type="InterPro" id="IPR056986">
    <property type="entry name" value="JAG1_1/2_dom"/>
</dbReference>
<dbReference type="InterPro" id="IPR026219">
    <property type="entry name" value="Jagged/Serrate"/>
</dbReference>
<dbReference type="InterPro" id="IPR011651">
    <property type="entry name" value="Notch_ligand_N"/>
</dbReference>
<dbReference type="InterPro" id="IPR001007">
    <property type="entry name" value="VWF_dom"/>
</dbReference>
<dbReference type="PANTHER" id="PTHR12916">
    <property type="entry name" value="CYTOCHROME C OXIDASE POLYPEPTIDE VIC-2"/>
    <property type="match status" value="1"/>
</dbReference>
<dbReference type="PANTHER" id="PTHR12916:SF12">
    <property type="entry name" value="DELTA-LIKE PROTEIN"/>
    <property type="match status" value="1"/>
</dbReference>
<dbReference type="Pfam" id="PF01414">
    <property type="entry name" value="DSL"/>
    <property type="match status" value="1"/>
</dbReference>
<dbReference type="Pfam" id="PF00008">
    <property type="entry name" value="EGF"/>
    <property type="match status" value="8"/>
</dbReference>
<dbReference type="Pfam" id="PF21700">
    <property type="entry name" value="EGF_DL_JAG"/>
    <property type="match status" value="1"/>
</dbReference>
<dbReference type="Pfam" id="PF12661">
    <property type="entry name" value="hEGF"/>
    <property type="match status" value="5"/>
</dbReference>
<dbReference type="Pfam" id="PF23575">
    <property type="entry name" value="JAG1"/>
    <property type="match status" value="1"/>
</dbReference>
<dbReference type="Pfam" id="PF07657">
    <property type="entry name" value="MNNL"/>
    <property type="match status" value="1"/>
</dbReference>
<dbReference type="PRINTS" id="PR00010">
    <property type="entry name" value="EGFBLOOD"/>
</dbReference>
<dbReference type="PRINTS" id="PR02059">
    <property type="entry name" value="JAGGEDFAMILY"/>
</dbReference>
<dbReference type="SMART" id="SM00051">
    <property type="entry name" value="DSL"/>
    <property type="match status" value="1"/>
</dbReference>
<dbReference type="SMART" id="SM00181">
    <property type="entry name" value="EGF"/>
    <property type="match status" value="16"/>
</dbReference>
<dbReference type="SMART" id="SM00179">
    <property type="entry name" value="EGF_CA"/>
    <property type="match status" value="14"/>
</dbReference>
<dbReference type="SMART" id="SM00215">
    <property type="entry name" value="VWC_out"/>
    <property type="match status" value="1"/>
</dbReference>
<dbReference type="SUPFAM" id="SSF57196">
    <property type="entry name" value="EGF/Laminin"/>
    <property type="match status" value="6"/>
</dbReference>
<dbReference type="SUPFAM" id="SSF57184">
    <property type="entry name" value="Growth factor receptor domain"/>
    <property type="match status" value="2"/>
</dbReference>
<dbReference type="PROSITE" id="PS00010">
    <property type="entry name" value="ASX_HYDROXYL"/>
    <property type="match status" value="10"/>
</dbReference>
<dbReference type="PROSITE" id="PS51051">
    <property type="entry name" value="DSL"/>
    <property type="match status" value="1"/>
</dbReference>
<dbReference type="PROSITE" id="PS00022">
    <property type="entry name" value="EGF_1"/>
    <property type="match status" value="16"/>
</dbReference>
<dbReference type="PROSITE" id="PS01186">
    <property type="entry name" value="EGF_2"/>
    <property type="match status" value="11"/>
</dbReference>
<dbReference type="PROSITE" id="PS50026">
    <property type="entry name" value="EGF_3"/>
    <property type="match status" value="15"/>
</dbReference>
<dbReference type="PROSITE" id="PS01187">
    <property type="entry name" value="EGF_CA"/>
    <property type="match status" value="7"/>
</dbReference>
<protein>
    <recommendedName>
        <fullName>Protein jagged-2</fullName>
        <shortName>Jagged2</shortName>
    </recommendedName>
</protein>
<feature type="signal peptide" evidence="3">
    <location>
        <begin position="1"/>
        <end position="23"/>
    </location>
</feature>
<feature type="chain" id="PRO_0000007630" description="Protein jagged-2">
    <location>
        <begin position="24"/>
        <end position="1247"/>
    </location>
</feature>
<feature type="topological domain" description="Extracellular" evidence="3">
    <location>
        <begin position="24"/>
        <end position="1082"/>
    </location>
</feature>
<feature type="transmembrane region" description="Helical" evidence="3">
    <location>
        <begin position="1083"/>
        <end position="1103"/>
    </location>
</feature>
<feature type="topological domain" description="Cytoplasmic" evidence="3">
    <location>
        <begin position="1104"/>
        <end position="1247"/>
    </location>
</feature>
<feature type="domain" description="DSL" evidence="5">
    <location>
        <begin position="196"/>
        <end position="240"/>
    </location>
</feature>
<feature type="domain" description="EGF-like 1" evidence="4">
    <location>
        <begin position="241"/>
        <end position="274"/>
    </location>
</feature>
<feature type="domain" description="EGF-like 2; atypical" evidence="4">
    <location>
        <begin position="275"/>
        <end position="305"/>
    </location>
</feature>
<feature type="domain" description="EGF-like 3" evidence="4">
    <location>
        <begin position="307"/>
        <end position="345"/>
    </location>
</feature>
<feature type="domain" description="EGF-like 4" evidence="4">
    <location>
        <begin position="347"/>
        <end position="383"/>
    </location>
</feature>
<feature type="domain" description="EGF-like 5; calcium-binding" evidence="4">
    <location>
        <begin position="385"/>
        <end position="421"/>
    </location>
</feature>
<feature type="domain" description="EGF-like 6; calcium-binding" evidence="4">
    <location>
        <begin position="423"/>
        <end position="459"/>
    </location>
</feature>
<feature type="domain" description="EGF-like 7; calcium-binding" evidence="4">
    <location>
        <begin position="461"/>
        <end position="496"/>
    </location>
</feature>
<feature type="domain" description="EGF-like 8" evidence="4">
    <location>
        <begin position="498"/>
        <end position="534"/>
    </location>
</feature>
<feature type="domain" description="EGF-like 9" evidence="4">
    <location>
        <begin position="536"/>
        <end position="572"/>
    </location>
</feature>
<feature type="domain" description="EGF-like 10; atypical" evidence="4">
    <location>
        <begin position="574"/>
        <end position="634"/>
    </location>
</feature>
<feature type="domain" description="EGF-like 11; calcium-binding" evidence="4">
    <location>
        <begin position="636"/>
        <end position="672"/>
    </location>
</feature>
<feature type="domain" description="EGF-like 12; calcium-binding" evidence="4">
    <location>
        <begin position="674"/>
        <end position="710"/>
    </location>
</feature>
<feature type="domain" description="EGF-like 13" evidence="4">
    <location>
        <begin position="712"/>
        <end position="748"/>
    </location>
</feature>
<feature type="domain" description="EGF-like 14" evidence="4">
    <location>
        <begin position="751"/>
        <end position="787"/>
    </location>
</feature>
<feature type="domain" description="EGF-like 15; calcium-binding" evidence="4">
    <location>
        <begin position="789"/>
        <end position="825"/>
    </location>
</feature>
<feature type="domain" description="EGF-like 16; calcium-binding" evidence="4">
    <location>
        <begin position="827"/>
        <end position="863"/>
    </location>
</feature>
<feature type="region of interest" description="Disordered" evidence="6">
    <location>
        <begin position="1115"/>
        <end position="1148"/>
    </location>
</feature>
<feature type="region of interest" description="Disordered" evidence="6">
    <location>
        <begin position="1167"/>
        <end position="1247"/>
    </location>
</feature>
<feature type="compositionally biased region" description="Basic and acidic residues" evidence="6">
    <location>
        <begin position="1115"/>
        <end position="1125"/>
    </location>
</feature>
<feature type="compositionally biased region" description="Basic and acidic residues" evidence="6">
    <location>
        <begin position="1192"/>
        <end position="1212"/>
    </location>
</feature>
<feature type="compositionally biased region" description="Basic and acidic residues" evidence="6">
    <location>
        <begin position="1230"/>
        <end position="1247"/>
    </location>
</feature>
<feature type="modified residue" description="Phosphoserine" evidence="2">
    <location>
        <position position="1125"/>
    </location>
</feature>
<feature type="glycosylation site" description="N-linked (GlcNAc...) asparagine" evidence="3">
    <location>
        <position position="153"/>
    </location>
</feature>
<feature type="glycosylation site" description="N-linked (GlcNAc...) asparagine" evidence="3">
    <location>
        <position position="570"/>
    </location>
</feature>
<feature type="glycosylation site" description="N-linked (GlcNAc...) asparagine" evidence="3">
    <location>
        <position position="619"/>
    </location>
</feature>
<feature type="glycosylation site" description="N-linked (GlcNAc...) asparagine" evidence="3">
    <location>
        <position position="752"/>
    </location>
</feature>
<feature type="glycosylation site" description="N-linked (GlcNAc...) asparagine" evidence="3">
    <location>
        <position position="1060"/>
    </location>
</feature>
<feature type="disulfide bond" evidence="1">
    <location>
        <begin position="198"/>
        <end position="207"/>
    </location>
</feature>
<feature type="disulfide bond" evidence="1">
    <location>
        <begin position="211"/>
        <end position="223"/>
    </location>
</feature>
<feature type="disulfide bond" evidence="1">
    <location>
        <begin position="231"/>
        <end position="240"/>
    </location>
</feature>
<feature type="disulfide bond" evidence="1">
    <location>
        <begin position="245"/>
        <end position="256"/>
    </location>
</feature>
<feature type="disulfide bond" evidence="1">
    <location>
        <begin position="249"/>
        <end position="262"/>
    </location>
</feature>
<feature type="disulfide bond" evidence="1">
    <location>
        <begin position="264"/>
        <end position="273"/>
    </location>
</feature>
<feature type="disulfide bond" evidence="1">
    <location>
        <begin position="276"/>
        <end position="287"/>
    </location>
</feature>
<feature type="disulfide bond" evidence="1">
    <location>
        <begin position="282"/>
        <end position="293"/>
    </location>
</feature>
<feature type="disulfide bond" evidence="1">
    <location>
        <begin position="295"/>
        <end position="304"/>
    </location>
</feature>
<feature type="disulfide bond" evidence="1">
    <location>
        <begin position="311"/>
        <end position="323"/>
    </location>
</feature>
<feature type="disulfide bond" evidence="1">
    <location>
        <begin position="317"/>
        <end position="333"/>
    </location>
</feature>
<feature type="disulfide bond" evidence="1">
    <location>
        <begin position="335"/>
        <end position="344"/>
    </location>
</feature>
<feature type="disulfide bond" evidence="1">
    <location>
        <begin position="351"/>
        <end position="362"/>
    </location>
</feature>
<feature type="disulfide bond" evidence="1">
    <location>
        <begin position="356"/>
        <end position="371"/>
    </location>
</feature>
<feature type="disulfide bond" evidence="1">
    <location>
        <begin position="373"/>
        <end position="382"/>
    </location>
</feature>
<feature type="disulfide bond" evidence="1">
    <location>
        <begin position="389"/>
        <end position="400"/>
    </location>
</feature>
<feature type="disulfide bond" evidence="1">
    <location>
        <begin position="394"/>
        <end position="409"/>
    </location>
</feature>
<feature type="disulfide bond" evidence="1">
    <location>
        <begin position="411"/>
        <end position="420"/>
    </location>
</feature>
<feature type="disulfide bond" evidence="1">
    <location>
        <begin position="427"/>
        <end position="438"/>
    </location>
</feature>
<feature type="disulfide bond" evidence="1">
    <location>
        <begin position="432"/>
        <end position="447"/>
    </location>
</feature>
<feature type="disulfide bond" evidence="1">
    <location>
        <begin position="449"/>
        <end position="458"/>
    </location>
</feature>
<feature type="disulfide bond" evidence="1">
    <location>
        <begin position="465"/>
        <end position="475"/>
    </location>
</feature>
<feature type="disulfide bond" evidence="1">
    <location>
        <begin position="469"/>
        <end position="484"/>
    </location>
</feature>
<feature type="disulfide bond" evidence="1">
    <location>
        <begin position="486"/>
        <end position="495"/>
    </location>
</feature>
<feature type="disulfide bond" evidence="1">
    <location>
        <begin position="502"/>
        <end position="513"/>
    </location>
</feature>
<feature type="disulfide bond" evidence="1">
    <location>
        <begin position="507"/>
        <end position="522"/>
    </location>
</feature>
<feature type="disulfide bond" evidence="1">
    <location>
        <begin position="524"/>
        <end position="533"/>
    </location>
</feature>
<feature type="disulfide bond" evidence="1">
    <location>
        <begin position="540"/>
        <end position="551"/>
    </location>
</feature>
<feature type="disulfide bond" evidence="1">
    <location>
        <begin position="545"/>
        <end position="560"/>
    </location>
</feature>
<feature type="disulfide bond" evidence="1">
    <location>
        <begin position="562"/>
        <end position="571"/>
    </location>
</feature>
<feature type="disulfide bond" evidence="3">
    <location>
        <begin position="589"/>
        <end position="612"/>
    </location>
</feature>
<feature type="disulfide bond" evidence="3">
    <location>
        <begin position="606"/>
        <end position="622"/>
    </location>
</feature>
<feature type="disulfide bond" evidence="1">
    <location>
        <begin position="624"/>
        <end position="633"/>
    </location>
</feature>
<feature type="disulfide bond" evidence="1">
    <location>
        <begin position="640"/>
        <end position="651"/>
    </location>
</feature>
<feature type="disulfide bond" evidence="1">
    <location>
        <begin position="645"/>
        <end position="660"/>
    </location>
</feature>
<feature type="disulfide bond" evidence="1">
    <location>
        <begin position="662"/>
        <end position="671"/>
    </location>
</feature>
<feature type="disulfide bond" evidence="1">
    <location>
        <begin position="678"/>
        <end position="689"/>
    </location>
</feature>
<feature type="disulfide bond" evidence="1">
    <location>
        <begin position="683"/>
        <end position="698"/>
    </location>
</feature>
<feature type="disulfide bond" evidence="1">
    <location>
        <begin position="700"/>
        <end position="709"/>
    </location>
</feature>
<feature type="disulfide bond" evidence="1">
    <location>
        <begin position="716"/>
        <end position="727"/>
    </location>
</feature>
<feature type="disulfide bond" evidence="1">
    <location>
        <begin position="721"/>
        <end position="736"/>
    </location>
</feature>
<feature type="disulfide bond" evidence="1">
    <location>
        <begin position="738"/>
        <end position="747"/>
    </location>
</feature>
<feature type="disulfide bond" evidence="1">
    <location>
        <begin position="755"/>
        <end position="766"/>
    </location>
</feature>
<feature type="disulfide bond" evidence="1">
    <location>
        <begin position="760"/>
        <end position="775"/>
    </location>
</feature>
<feature type="disulfide bond" evidence="1">
    <location>
        <begin position="777"/>
        <end position="786"/>
    </location>
</feature>
<feature type="disulfide bond" evidence="1">
    <location>
        <begin position="793"/>
        <end position="804"/>
    </location>
</feature>
<feature type="disulfide bond" evidence="1">
    <location>
        <begin position="798"/>
        <end position="813"/>
    </location>
</feature>
<feature type="disulfide bond" evidence="1">
    <location>
        <begin position="815"/>
        <end position="824"/>
    </location>
</feature>
<feature type="disulfide bond" evidence="1">
    <location>
        <begin position="831"/>
        <end position="842"/>
    </location>
</feature>
<feature type="disulfide bond" evidence="1">
    <location>
        <begin position="836"/>
        <end position="851"/>
    </location>
</feature>
<feature type="disulfide bond" evidence="1">
    <location>
        <begin position="853"/>
        <end position="862"/>
    </location>
</feature>
<feature type="sequence conflict" description="In Ref. 3; AAC14010." evidence="8" ref="3">
    <original>L</original>
    <variation>M</variation>
    <location>
        <position position="302"/>
    </location>
</feature>
<feature type="sequence conflict" description="In Ref. 1; AAF16411, 3; AAC14010 and 4; CAA74835." evidence="8" ref="1 3 4">
    <original>N</original>
    <variation>S</variation>
    <location>
        <position position="378"/>
    </location>
</feature>
<feature type="sequence conflict" description="In Ref. 3; AAC14010." evidence="8" ref="3">
    <original>N</original>
    <variation>T</variation>
    <location>
        <position position="461"/>
    </location>
</feature>
<feature type="sequence conflict" description="In Ref. 3; AAC14010." evidence="8" ref="3">
    <original>CQHGGTCKDL</original>
    <variation>VSAWGHLQGP</variation>
    <location>
        <begin position="469"/>
        <end position="478"/>
    </location>
</feature>
<feature type="sequence conflict" description="In Ref. 3; AAC14010." evidence="8" ref="3">
    <original>G</original>
    <variation>V</variation>
    <location>
        <position position="492"/>
    </location>
</feature>
<feature type="sequence conflict" description="In Ref. 3; AAC14010." evidence="8" ref="3">
    <original>L</original>
    <variation>F</variation>
    <location>
        <position position="546"/>
    </location>
</feature>
<feature type="sequence conflict" description="In Ref. 3; AAC14010." evidence="8" ref="3">
    <original>A</original>
    <variation>V</variation>
    <location>
        <position position="549"/>
    </location>
</feature>
<feature type="sequence conflict" description="In Ref. 4; CAA74835." evidence="8" ref="4">
    <original>RCAC</original>
    <variation>PAR</variation>
    <location>
        <begin position="735"/>
        <end position="738"/>
    </location>
</feature>
<feature type="sequence conflict" description="In Ref. 3; AAC14010." evidence="8" ref="3">
    <original>N</original>
    <variation>H</variation>
    <location>
        <position position="809"/>
    </location>
</feature>
<feature type="sequence conflict" description="In Ref. 3; AAC14010." evidence="8" ref="3">
    <original>R</original>
    <variation>A</variation>
    <location>
        <position position="812"/>
    </location>
</feature>
<feature type="sequence conflict" description="In Ref. 1; AAF16411." evidence="8" ref="1">
    <original>V</original>
    <variation>M</variation>
    <location>
        <position position="1030"/>
    </location>
</feature>
<feature type="sequence conflict" description="In Ref. 1; AAF16411." evidence="8" ref="1">
    <original>A</original>
    <variation>T</variation>
    <location>
        <position position="1126"/>
    </location>
</feature>
<feature type="sequence conflict" description="In Ref. 1; AAF16411." evidence="8" ref="1">
    <original>R</original>
    <variation>C</variation>
    <location>
        <position position="1223"/>
    </location>
</feature>
<evidence type="ECO:0000250" key="1"/>
<evidence type="ECO:0000250" key="2">
    <source>
        <dbReference type="UniProtKB" id="Q9Y219"/>
    </source>
</evidence>
<evidence type="ECO:0000255" key="3"/>
<evidence type="ECO:0000255" key="4">
    <source>
        <dbReference type="PROSITE-ProRule" id="PRU00076"/>
    </source>
</evidence>
<evidence type="ECO:0000255" key="5">
    <source>
        <dbReference type="PROSITE-ProRule" id="PRU00377"/>
    </source>
</evidence>
<evidence type="ECO:0000256" key="6">
    <source>
        <dbReference type="SAM" id="MobiDB-lite"/>
    </source>
</evidence>
<evidence type="ECO:0000269" key="7">
    <source>
    </source>
</evidence>
<evidence type="ECO:0000305" key="8"/>
<keyword id="KW-0106">Calcium</keyword>
<keyword id="KW-0217">Developmental protein</keyword>
<keyword id="KW-1015">Disulfide bond</keyword>
<keyword id="KW-0245">EGF-like domain</keyword>
<keyword id="KW-0325">Glycoprotein</keyword>
<keyword id="KW-0472">Membrane</keyword>
<keyword id="KW-0914">Notch signaling pathway</keyword>
<keyword id="KW-0597">Phosphoprotein</keyword>
<keyword id="KW-1185">Reference proteome</keyword>
<keyword id="KW-0677">Repeat</keyword>
<keyword id="KW-0732">Signal</keyword>
<keyword id="KW-0812">Transmembrane</keyword>
<keyword id="KW-1133">Transmembrane helix</keyword>
<gene>
    <name type="primary">Jag2</name>
</gene>
<name>JAG2_MOUSE</name>
<reference key="1">
    <citation type="submission" date="1997-12" db="EMBL/GenBank/DDBJ databases">
        <authorList>
            <person name="Tsai S."/>
        </authorList>
    </citation>
    <scope>NUCLEOTIDE SEQUENCE [MRNA]</scope>
    <source>
        <strain>Swiss Webster / NIH</strain>
    </source>
</reference>
<reference key="2">
    <citation type="journal article" date="2009" name="PLoS Biol.">
        <title>Lineage-specific biology revealed by a finished genome assembly of the mouse.</title>
        <authorList>
            <person name="Church D.M."/>
            <person name="Goodstadt L."/>
            <person name="Hillier L.W."/>
            <person name="Zody M.C."/>
            <person name="Goldstein S."/>
            <person name="She X."/>
            <person name="Bult C.J."/>
            <person name="Agarwala R."/>
            <person name="Cherry J.L."/>
            <person name="DiCuccio M."/>
            <person name="Hlavina W."/>
            <person name="Kapustin Y."/>
            <person name="Meric P."/>
            <person name="Maglott D."/>
            <person name="Birtle Z."/>
            <person name="Marques A.C."/>
            <person name="Graves T."/>
            <person name="Zhou S."/>
            <person name="Teague B."/>
            <person name="Potamousis K."/>
            <person name="Churas C."/>
            <person name="Place M."/>
            <person name="Herschleb J."/>
            <person name="Runnheim R."/>
            <person name="Forrest D."/>
            <person name="Amos-Landgraf J."/>
            <person name="Schwartz D.C."/>
            <person name="Cheng Z."/>
            <person name="Lindblad-Toh K."/>
            <person name="Eichler E.E."/>
            <person name="Ponting C.P."/>
        </authorList>
    </citation>
    <scope>NUCLEOTIDE SEQUENCE [LARGE SCALE GENOMIC DNA]</scope>
    <source>
        <strain>C57BL/6J</strain>
    </source>
</reference>
<reference key="3">
    <citation type="journal article" date="1997" name="Mamm. Genome">
        <title>The Jagged2 gene maps to chromosome 12 and is a candidate for the lgl and sm mutations.</title>
        <authorList>
            <person name="Lan Y."/>
            <person name="Jiang R."/>
            <person name="Shawber C."/>
            <person name="Weinmaster G."/>
            <person name="Gridley T."/>
        </authorList>
    </citation>
    <scope>NUCLEOTIDE SEQUENCE [MRNA] OF 302-819</scope>
    <source>
        <tissue>Brain</tissue>
    </source>
</reference>
<reference key="4">
    <citation type="journal article" date="1997" name="Mech. Dev.">
        <title>JAGGED2: a putative Notch ligand expressed in the apical ectodermal ridge and in sites of epithelial-mesenchymal interactions.</title>
        <authorList>
            <person name="Valsecchi C."/>
            <person name="Ghezzi C."/>
            <person name="Ballabio A."/>
            <person name="Rugarli E.I."/>
        </authorList>
    </citation>
    <scope>NUCLEOTIDE SEQUENCE [MRNA] OF 325-759</scope>
    <source>
        <tissue>Brain</tissue>
    </source>
</reference>
<reference key="5">
    <citation type="journal article" date="1997" name="Mol. Cell. Biol.">
        <title>Isolation and functional analysis of a cDNA for human Jagged2, a gene encoding a ligand for the Notch1 receptor.</title>
        <authorList>
            <person name="Luo B."/>
            <person name="Aster J.C."/>
            <person name="Hasserjian R.P."/>
            <person name="Kuo F."/>
            <person name="Sklar J."/>
        </authorList>
    </citation>
    <scope>TISSUE SPECIFICITY</scope>
</reference>